<sequence>MVTKESIISDLEKENVGPEFGEFLNSLQTDLNSEKPLIEQVKSQLETHFNLGPETQEFSRKNDNAPVDQLLTNYYNNYEVNVLEFVLQMGFCKDLSIPLNVWFVLDMISQLSTSKQDLPLDYYLVLNNSHTGKYSDFVRYLIYEAVGAEIHCFEQGDMPQQYRSSRWEDKVKGPALANRGPIRGNVGAGDRKITFHLLCKKTARMILVGDDRETDFEMSDRSFVTLLLDYYQRVGTTKKIDLLLLTNNYDTNMNNKLQQLKILESLNMLKSNCYVLDYQITADQVTANFNSYVEGIPAFRRHEIANFLKKRRTPKNADELIFKYVGRWNICYQKKFHQGNISIHQISGYLD</sequence>
<name>PFKA3_KOMPG</name>
<dbReference type="EMBL" id="DQ352840">
    <property type="protein sequence ID" value="ABC86235.1"/>
    <property type="molecule type" value="Genomic_DNA"/>
</dbReference>
<dbReference type="EMBL" id="DQ374390">
    <property type="protein sequence ID" value="ABC86236.1"/>
    <property type="molecule type" value="Genomic_DNA"/>
</dbReference>
<dbReference type="EMBL" id="FN392322">
    <property type="protein sequence ID" value="CAY71549.1"/>
    <property type="molecule type" value="Genomic_DNA"/>
</dbReference>
<dbReference type="RefSeq" id="XP_002493728.1">
    <property type="nucleotide sequence ID" value="XM_002493683.1"/>
</dbReference>
<dbReference type="SMR" id="C4R7H4"/>
<dbReference type="STRING" id="644223.C4R7H4"/>
<dbReference type="EnsemblFungi" id="CAY71549">
    <property type="protein sequence ID" value="CAY71549"/>
    <property type="gene ID" value="PAS_chr4_0943"/>
</dbReference>
<dbReference type="GeneID" id="8200752"/>
<dbReference type="KEGG" id="ppa:PAS_chr4_0943"/>
<dbReference type="HOGENOM" id="CLU_790135_0_0_1"/>
<dbReference type="InParanoid" id="C4R7H4"/>
<dbReference type="OrthoDB" id="10288091at2759"/>
<dbReference type="UniPathway" id="UPA00109">
    <property type="reaction ID" value="UER00182"/>
</dbReference>
<dbReference type="Proteomes" id="UP000000314">
    <property type="component" value="Chromosome 4"/>
</dbReference>
<dbReference type="GO" id="GO:0005737">
    <property type="term" value="C:cytoplasm"/>
    <property type="evidence" value="ECO:0007669"/>
    <property type="project" value="UniProtKB-SubCell"/>
</dbReference>
<dbReference type="GO" id="GO:0006096">
    <property type="term" value="P:glycolytic process"/>
    <property type="evidence" value="ECO:0007669"/>
    <property type="project" value="UniProtKB-UniPathway"/>
</dbReference>
<dbReference type="Gene3D" id="3.40.50.11920">
    <property type="match status" value="1"/>
</dbReference>
<dbReference type="InterPro" id="IPR038615">
    <property type="entry name" value="PpPFK_gamma_sf"/>
</dbReference>
<dbReference type="Pfam" id="PF22457">
    <property type="entry name" value="PpPFK_gamma-like_C"/>
    <property type="match status" value="1"/>
</dbReference>
<gene>
    <name type="primary">PFK3</name>
    <name type="ordered locus">PAS_chr4_0943</name>
</gene>
<accession>C4R7H4</accession>
<accession>A2SVT8</accession>
<proteinExistence type="inferred from homology"/>
<organism>
    <name type="scientific">Komagataella phaffii (strain GS115 / ATCC 20864)</name>
    <name type="common">Yeast</name>
    <name type="synonym">Pichia pastoris</name>
    <dbReference type="NCBI Taxonomy" id="644223"/>
    <lineage>
        <taxon>Eukaryota</taxon>
        <taxon>Fungi</taxon>
        <taxon>Dikarya</taxon>
        <taxon>Ascomycota</taxon>
        <taxon>Saccharomycotina</taxon>
        <taxon>Pichiomycetes</taxon>
        <taxon>Pichiales</taxon>
        <taxon>Pichiaceae</taxon>
        <taxon>Komagataella</taxon>
    </lineage>
</organism>
<comment type="function">
    <text evidence="1">Structural subunit of pyrophosphate--fructose 6-phosphate 1-phosphotransferase. Not required for catalytic activity. Fine-tunes allosteric regulation of the ATP-PFK by ATP, fructose 2,6-bisphosphate and AMP (By similarity).</text>
</comment>
<comment type="pathway">
    <text>Carbohydrate degradation; glycolysis; D-glyceraldehyde 3-phosphate and glycerone phosphate from D-glucose: step 3/4.</text>
</comment>
<comment type="subunit">
    <text evidence="1">Heterododecamer of 4 alpha, 4 beta and 4 gamma chains. The gamma chain bridges the N-terminal halves of the alpha and beta subunits (By similarity).</text>
</comment>
<comment type="subcellular location">
    <subcellularLocation>
        <location evidence="1">Cytoplasm</location>
    </subcellularLocation>
</comment>
<comment type="disruption phenotype">
    <text evidence="2">Decreased growth on nutrient limitation and reduced cell flocculation compared to wild-type.</text>
</comment>
<comment type="miscellaneous">
    <text>This subunit is only found in some Pichia species.</text>
</comment>
<feature type="chain" id="PRO_0000429726" description="ATP-dependent 6-phosphofructokinase subunit gamma">
    <location>
        <begin position="1"/>
        <end position="351"/>
    </location>
</feature>
<keyword id="KW-0963">Cytoplasm</keyword>
<keyword id="KW-0324">Glycolysis</keyword>
<keyword id="KW-1185">Reference proteome</keyword>
<protein>
    <recommendedName>
        <fullName>ATP-dependent 6-phosphofructokinase subunit gamma</fullName>
    </recommendedName>
    <alternativeName>
        <fullName>ATP-dependent 6-phosphofructokinase</fullName>
        <shortName>ATP-PFK</shortName>
        <shortName>Phosphofructokinase 3</shortName>
    </alternativeName>
    <alternativeName>
        <fullName>Phosphohexokinase</fullName>
    </alternativeName>
</protein>
<reference key="1">
    <citation type="journal article" date="2007" name="J. Biol. Chem.">
        <title>A novel form of 6-phosphofructokinase. Identification and functional relevance of a third type of subunit in Pichia pastoris.</title>
        <authorList>
            <person name="Tanneberger K."/>
            <person name="Kirchberger J."/>
            <person name="Baer J."/>
            <person name="Schellenberger W."/>
            <person name="Rothemund S."/>
            <person name="Kamprad M."/>
            <person name="Otto H."/>
            <person name="Schoeneberg T."/>
            <person name="Edelmann A."/>
        </authorList>
    </citation>
    <scope>NUCLEOTIDE SEQUENCE [GENOMIC DNA]</scope>
    <scope>DISRUPTION PHENOTYPE</scope>
    <source>
        <strain>GS115 / ATCC 20864</strain>
        <strain>JC307</strain>
    </source>
</reference>
<reference key="2">
    <citation type="journal article" date="2009" name="Nat. Biotechnol.">
        <title>Genome sequence of the recombinant protein production host Pichia pastoris.</title>
        <authorList>
            <person name="De Schutter K."/>
            <person name="Lin Y.-C."/>
            <person name="Tiels P."/>
            <person name="Van Hecke A."/>
            <person name="Glinka S."/>
            <person name="Weber-Lehmann J."/>
            <person name="Rouze P."/>
            <person name="Van de Peer Y."/>
            <person name="Callewaert N."/>
        </authorList>
    </citation>
    <scope>NUCLEOTIDE SEQUENCE [LARGE SCALE GENOMIC DNA]</scope>
    <source>
        <strain>GS115 / ATCC 20864</strain>
    </source>
</reference>
<evidence type="ECO:0000250" key="1"/>
<evidence type="ECO:0000269" key="2">
    <source>
    </source>
</evidence>